<reference key="1">
    <citation type="journal article" date="2006" name="Virus Res.">
        <title>Completion of the genome sequence of Lettuce necrotic yellows virus, type species of the genus Cytorhabdovirus.</title>
        <authorList>
            <person name="Dietzgen R.G."/>
            <person name="Callaghan B."/>
            <person name="Wetzel T."/>
            <person name="Dale J.L."/>
        </authorList>
    </citation>
    <scope>NUCLEOTIDE SEQUENCE [GENOMIC RNA]</scope>
</reference>
<comment type="function">
    <text evidence="1">Attaches the virus to host cellular receptor, inducing endocytosis of the virion. In the endosome, the acidic pH induces conformational changes in the glycoprotein trimer, which trigger fusion between virus and cell membrane (By similarity).</text>
</comment>
<comment type="subunit">
    <text evidence="1">Homotrimer. Interacts with matrix protein (By similarity).</text>
</comment>
<comment type="subcellular location">
    <subcellularLocation>
        <location evidence="1">Virion membrane</location>
        <topology evidence="1">Single-pass type I membrane protein</topology>
    </subcellularLocation>
</comment>
<comment type="PTM">
    <text evidence="1">Glycosylated by host. Glycosylation is crucial for glycoprotein export at the cell surface (By similarity).</text>
</comment>
<comment type="similarity">
    <text evidence="3">Belongs to the cytorhabdovirus glycoprotein family.</text>
</comment>
<dbReference type="EMBL" id="AJ251533">
    <property type="protein sequence ID" value="CAC18651.1"/>
    <property type="molecule type" value="Genomic_RNA"/>
</dbReference>
<dbReference type="EMBL" id="AJ867584">
    <property type="protein sequence ID" value="CAI30425.1"/>
    <property type="molecule type" value="Genomic_RNA"/>
</dbReference>
<dbReference type="RefSeq" id="YP_425091.1">
    <property type="nucleotide sequence ID" value="NC_007642.1"/>
</dbReference>
<dbReference type="GeneID" id="3844361"/>
<dbReference type="KEGG" id="vg:3844361"/>
<dbReference type="Proteomes" id="UP000008592">
    <property type="component" value="Segment"/>
</dbReference>
<dbReference type="GO" id="GO:0016020">
    <property type="term" value="C:membrane"/>
    <property type="evidence" value="ECO:0007669"/>
    <property type="project" value="UniProtKB-KW"/>
</dbReference>
<dbReference type="GO" id="GO:0019031">
    <property type="term" value="C:viral envelope"/>
    <property type="evidence" value="ECO:0007669"/>
    <property type="project" value="UniProtKB-KW"/>
</dbReference>
<dbReference type="GO" id="GO:0055036">
    <property type="term" value="C:virion membrane"/>
    <property type="evidence" value="ECO:0007669"/>
    <property type="project" value="UniProtKB-SubCell"/>
</dbReference>
<dbReference type="GO" id="GO:0046718">
    <property type="term" value="P:symbiont entry into host cell"/>
    <property type="evidence" value="ECO:0007669"/>
    <property type="project" value="UniProtKB-KW"/>
</dbReference>
<dbReference type="GO" id="GO:0019062">
    <property type="term" value="P:virion attachment to host cell"/>
    <property type="evidence" value="ECO:0007669"/>
    <property type="project" value="UniProtKB-KW"/>
</dbReference>
<protein>
    <recommendedName>
        <fullName>Glycoprotein</fullName>
    </recommendedName>
</protein>
<organismHost>
    <name type="scientific">Embergeria</name>
    <dbReference type="NCBI Taxonomy" id="43191"/>
</organismHost>
<organismHost>
    <name type="scientific">Lactuca sativa</name>
    <name type="common">Garden lettuce</name>
    <dbReference type="NCBI Taxonomy" id="4236"/>
</organismHost>
<organismHost>
    <name type="scientific">Reichardia tingitana</name>
    <dbReference type="NCBI Taxonomy" id="43208"/>
</organismHost>
<organismHost>
    <name type="scientific">Sonchus hydrophilus</name>
    <dbReference type="NCBI Taxonomy" id="255580"/>
</organismHost>
<organismHost>
    <name type="scientific">Sonchus oleraceus</name>
    <name type="common">Common sowthistle</name>
    <dbReference type="NCBI Taxonomy" id="50207"/>
</organismHost>
<keyword id="KW-0325">Glycoprotein</keyword>
<keyword id="KW-0945">Host-virus interaction</keyword>
<keyword id="KW-0472">Membrane</keyword>
<keyword id="KW-1185">Reference proteome</keyword>
<keyword id="KW-0732">Signal</keyword>
<keyword id="KW-0812">Transmembrane</keyword>
<keyword id="KW-1133">Transmembrane helix</keyword>
<keyword id="KW-1161">Viral attachment to host cell</keyword>
<keyword id="KW-0261">Viral envelope protein</keyword>
<keyword id="KW-0946">Virion</keyword>
<keyword id="KW-1160">Virus entry into host cell</keyword>
<name>GLYCO_LNYV3</name>
<gene>
    <name type="primary">G</name>
</gene>
<evidence type="ECO:0000250" key="1"/>
<evidence type="ECO:0000255" key="2"/>
<evidence type="ECO:0000305" key="3"/>
<feature type="signal peptide" evidence="2">
    <location>
        <begin position="1"/>
        <end position="25"/>
    </location>
</feature>
<feature type="chain" id="PRO_5000065805" description="Glycoprotein">
    <location>
        <begin position="26"/>
        <end position="551"/>
    </location>
</feature>
<feature type="topological domain" description="Virion surface" evidence="2">
    <location>
        <begin position="26"/>
        <end position="503"/>
    </location>
</feature>
<feature type="transmembrane region" description="Helical" evidence="2">
    <location>
        <begin position="504"/>
        <end position="524"/>
    </location>
</feature>
<feature type="topological domain" description="Intravirion" evidence="2">
    <location>
        <begin position="525"/>
        <end position="551"/>
    </location>
</feature>
<proteinExistence type="inferred from homology"/>
<organism>
    <name type="scientific">Lettuce necrotic yellows virus (isolate 318)</name>
    <name type="common">LNYV</name>
    <dbReference type="NCBI Taxonomy" id="928304"/>
    <lineage>
        <taxon>Viruses</taxon>
        <taxon>Riboviria</taxon>
        <taxon>Orthornavirae</taxon>
        <taxon>Negarnaviricota</taxon>
        <taxon>Haploviricotina</taxon>
        <taxon>Monjiviricetes</taxon>
        <taxon>Mononegavirales</taxon>
        <taxon>Rhabdoviridae</taxon>
        <taxon>Betarhabdovirinae</taxon>
        <taxon>Cytorhabdovirus</taxon>
        <taxon>Cytorhabdovirus lactucanecante</taxon>
    </lineage>
</organism>
<sequence>MVSKITLLCFAITCDVLISMGTVQGVFNHSVGPLAVCSPDMEDARAYTENCYRRCSRNKEPSTHGYVWLYSDTAPKGGPVVTRCNKVRVKQVFTETWSFSFIKGTPTRMTLDVTEAECVAVMRSQCPTHNCNIKAPSELPEEYHYASDTEVVQDYLEILSMPSGLDYMEENLRITPSQSKFSFQLTDGKGQEGQYIYFWDTKYDDTKCPFDSFQSHGCDKYDSPLDLINCRESRFVIPSIANSTTLVGACQGLQKSTTGLIYKWDDRPDSIANDSKRIALTKNDQTAGNVATLRVLVADSLNAVDEDLCHTQCEMLDFILRSDRKREVLTRIGGSYLVVSKTSYIRQCRPLVGCRIVKPHYFCGNPNRVAIICHGKVWYWDPLKSYVDEGMNCERRVAGTKLVFAVGNHEYAIDDDMHVELPEHETYGISHDLLASSEDRISKDIVDPTELRNSWQSHIAKEGRMSIEPLSQDKQVSHWDAEFSNPLTWLTSAGGWILDMSHKVTLWATVFLTLGALVAGAKVWEIMRKANRKSQYKRTNTEPHDSQATWI</sequence>
<accession>Q9DIC6</accession>